<organism>
    <name type="scientific">Erwinia tasmaniensis (strain DSM 17950 / CFBP 7177 / CIP 109463 / NCPPB 4357 / Et1/99)</name>
    <dbReference type="NCBI Taxonomy" id="465817"/>
    <lineage>
        <taxon>Bacteria</taxon>
        <taxon>Pseudomonadati</taxon>
        <taxon>Pseudomonadota</taxon>
        <taxon>Gammaproteobacteria</taxon>
        <taxon>Enterobacterales</taxon>
        <taxon>Erwiniaceae</taxon>
        <taxon>Erwinia</taxon>
    </lineage>
</organism>
<evidence type="ECO:0000255" key="1">
    <source>
        <dbReference type="HAMAP-Rule" id="MF_00460"/>
    </source>
</evidence>
<name>RNFH_ERWT9</name>
<sequence length="95" mass="10765">MPDIAIEVVYALPEKQYLYNVKVPQGSSVEQAIIASGLLQLRPEIDLQENKVGIFSRPVKLHDEVNGGDRVEIYRPLIADPKDLRRQRAERAAKK</sequence>
<comment type="similarity">
    <text evidence="1">Belongs to the UPF0125 (RnfH) family.</text>
</comment>
<feature type="chain" id="PRO_1000200172" description="Protein RnfH">
    <location>
        <begin position="1"/>
        <end position="95"/>
    </location>
</feature>
<reference key="1">
    <citation type="journal article" date="2008" name="Environ. Microbiol.">
        <title>The genome of Erwinia tasmaniensis strain Et1/99, a non-pathogenic bacterium in the genus Erwinia.</title>
        <authorList>
            <person name="Kube M."/>
            <person name="Migdoll A.M."/>
            <person name="Mueller I."/>
            <person name="Kuhl H."/>
            <person name="Beck A."/>
            <person name="Reinhardt R."/>
            <person name="Geider K."/>
        </authorList>
    </citation>
    <scope>NUCLEOTIDE SEQUENCE [LARGE SCALE GENOMIC DNA]</scope>
    <source>
        <strain>DSM 17950 / CFBP 7177 / CIP 109463 / NCPPB 4357 / Et1/99</strain>
    </source>
</reference>
<proteinExistence type="inferred from homology"/>
<keyword id="KW-1185">Reference proteome</keyword>
<accession>B2VEC2</accession>
<dbReference type="EMBL" id="CU468135">
    <property type="protein sequence ID" value="CAO96020.1"/>
    <property type="molecule type" value="Genomic_DNA"/>
</dbReference>
<dbReference type="RefSeq" id="WP_012440721.1">
    <property type="nucleotide sequence ID" value="NC_010694.1"/>
</dbReference>
<dbReference type="SMR" id="B2VEC2"/>
<dbReference type="STRING" id="465817.ETA_09740"/>
<dbReference type="KEGG" id="eta:ETA_09740"/>
<dbReference type="eggNOG" id="COG2914">
    <property type="taxonomic scope" value="Bacteria"/>
</dbReference>
<dbReference type="HOGENOM" id="CLU_150721_1_0_6"/>
<dbReference type="OrthoDB" id="9796575at2"/>
<dbReference type="Proteomes" id="UP000001726">
    <property type="component" value="Chromosome"/>
</dbReference>
<dbReference type="Gene3D" id="3.10.20.280">
    <property type="entry name" value="RnfH-like"/>
    <property type="match status" value="1"/>
</dbReference>
<dbReference type="HAMAP" id="MF_00460">
    <property type="entry name" value="UPF0125_RnfH"/>
    <property type="match status" value="1"/>
</dbReference>
<dbReference type="InterPro" id="IPR016155">
    <property type="entry name" value="Mopterin_synth/thiamin_S_b"/>
</dbReference>
<dbReference type="InterPro" id="IPR005346">
    <property type="entry name" value="RnfH"/>
</dbReference>
<dbReference type="InterPro" id="IPR037021">
    <property type="entry name" value="RnfH_sf"/>
</dbReference>
<dbReference type="NCBIfam" id="NF002490">
    <property type="entry name" value="PRK01777.1"/>
    <property type="match status" value="1"/>
</dbReference>
<dbReference type="PANTHER" id="PTHR37483">
    <property type="entry name" value="UPF0125 PROTEIN RATB"/>
    <property type="match status" value="1"/>
</dbReference>
<dbReference type="PANTHER" id="PTHR37483:SF1">
    <property type="entry name" value="UPF0125 PROTEIN RATB"/>
    <property type="match status" value="1"/>
</dbReference>
<dbReference type="Pfam" id="PF03658">
    <property type="entry name" value="Ub-RnfH"/>
    <property type="match status" value="1"/>
</dbReference>
<dbReference type="SUPFAM" id="SSF54285">
    <property type="entry name" value="MoaD/ThiS"/>
    <property type="match status" value="1"/>
</dbReference>
<protein>
    <recommendedName>
        <fullName evidence="1">Protein RnfH</fullName>
    </recommendedName>
</protein>
<gene>
    <name evidence="1" type="primary">rnfH</name>
    <name type="ordered locus">ETA_09740</name>
</gene>